<accession>P0DMG9</accession>
<sequence>ADPRNPLEECFRETD</sequence>
<dbReference type="EC" id="1.4.3.2" evidence="2"/>
<dbReference type="GO" id="GO:0005576">
    <property type="term" value="C:extracellular region"/>
    <property type="evidence" value="ECO:0007669"/>
    <property type="project" value="UniProtKB-SubCell"/>
</dbReference>
<dbReference type="GO" id="GO:0001716">
    <property type="term" value="F:L-amino-acid oxidase activity"/>
    <property type="evidence" value="ECO:0007669"/>
    <property type="project" value="UniProtKB-EC"/>
</dbReference>
<dbReference type="GO" id="GO:0090729">
    <property type="term" value="F:toxin activity"/>
    <property type="evidence" value="ECO:0007669"/>
    <property type="project" value="UniProtKB-KW"/>
</dbReference>
<dbReference type="GO" id="GO:0006915">
    <property type="term" value="P:apoptotic process"/>
    <property type="evidence" value="ECO:0007669"/>
    <property type="project" value="UniProtKB-KW"/>
</dbReference>
<dbReference type="GO" id="GO:0042742">
    <property type="term" value="P:defense response to bacterium"/>
    <property type="evidence" value="ECO:0007669"/>
    <property type="project" value="UniProtKB-KW"/>
</dbReference>
<dbReference type="GO" id="GO:0031640">
    <property type="term" value="P:killing of cells of another organism"/>
    <property type="evidence" value="ECO:0007669"/>
    <property type="project" value="UniProtKB-KW"/>
</dbReference>
<reference key="1">
    <citation type="journal article" date="2008" name="J. Proteomics">
        <title>Snake venomics of the Brazilian pitvipers Bothrops cotiara and Bothrops fonsecai. Identification of taxonomy markers.</title>
        <authorList>
            <person name="Tashima A.K."/>
            <person name="Sanz L."/>
            <person name="Camargo A.C."/>
            <person name="Serrano S.M."/>
            <person name="Calvete J.J."/>
        </authorList>
    </citation>
    <scope>PROTEIN SEQUENCE</scope>
    <scope>IDENTIFICATION BY MASS SPECTROMETRY</scope>
    <scope>SUBCELLULAR LOCATION</scope>
    <source>
        <tissue>Venom</tissue>
    </source>
</reference>
<evidence type="ECO:0000250" key="1">
    <source>
        <dbReference type="UniProtKB" id="P0CC17"/>
    </source>
</evidence>
<evidence type="ECO:0000250" key="2">
    <source>
        <dbReference type="UniProtKB" id="P81382"/>
    </source>
</evidence>
<evidence type="ECO:0000269" key="3">
    <source>
    </source>
</evidence>
<evidence type="ECO:0000303" key="4">
    <source>
    </source>
</evidence>
<evidence type="ECO:0000305" key="5"/>
<evidence type="ECO:0000305" key="6">
    <source>
    </source>
</evidence>
<comment type="function">
    <text evidence="1">Catalyzes an oxidative deamination of predominantly hydrophobic and aromatic L-amino acids, thus producing hydrogen peroxide that may contribute to the diverse toxic effects of this enzyme. Exhibits diverse biological activities, such as hemorrhage, hemolysis, edema, apoptosis of vascular endothelial cells or tumor cell lines, antibacterial and antiparasitic activities, as well as regulation of platelet aggregation. Effects of snake L-amino oxidases on platelets are controversial, since they either induce aggregation or inhibit agonist-induced aggregation. These different effects are probably due to different experimental conditions.</text>
</comment>
<comment type="catalytic activity">
    <reaction evidence="2">
        <text>an L-alpha-amino acid + O2 + H2O = a 2-oxocarboxylate + H2O2 + NH4(+)</text>
        <dbReference type="Rhea" id="RHEA:13781"/>
        <dbReference type="ChEBI" id="CHEBI:15377"/>
        <dbReference type="ChEBI" id="CHEBI:15379"/>
        <dbReference type="ChEBI" id="CHEBI:16240"/>
        <dbReference type="ChEBI" id="CHEBI:28938"/>
        <dbReference type="ChEBI" id="CHEBI:35179"/>
        <dbReference type="ChEBI" id="CHEBI:59869"/>
        <dbReference type="EC" id="1.4.3.2"/>
    </reaction>
</comment>
<comment type="cofactor">
    <cofactor evidence="2">
        <name>FAD</name>
        <dbReference type="ChEBI" id="CHEBI:57692"/>
    </cofactor>
</comment>
<comment type="subunit">
    <text evidence="2">Homodimer; non-covalently linked.</text>
</comment>
<comment type="subcellular location">
    <subcellularLocation>
        <location evidence="3">Secreted</location>
    </subcellularLocation>
</comment>
<comment type="tissue specificity">
    <text evidence="6">Expressed by the venom gland.</text>
</comment>
<comment type="PTM">
    <text evidence="2">Contains 2 disulfide bonds.</text>
</comment>
<comment type="PTM">
    <text evidence="2">N-glycosylated.</text>
</comment>
<comment type="similarity">
    <text evidence="5">Belongs to the flavin monoamine oxidase family. FIG1 subfamily.</text>
</comment>
<proteinExistence type="evidence at protein level"/>
<protein>
    <recommendedName>
        <fullName evidence="4">L-amino-acid oxidase Bfon20</fullName>
        <shortName>LAAO</shortName>
        <shortName evidence="4">LAO</shortName>
        <ecNumber evidence="2">1.4.3.2</ecNumber>
    </recommendedName>
</protein>
<name>OXLA_BOTFO</name>
<organism>
    <name type="scientific">Bothrops fonsecai</name>
    <name type="common">Fonseca's lancehead</name>
    <name type="synonym">Rhinocerophis fonsecai</name>
    <dbReference type="NCBI Taxonomy" id="157549"/>
    <lineage>
        <taxon>Eukaryota</taxon>
        <taxon>Metazoa</taxon>
        <taxon>Chordata</taxon>
        <taxon>Craniata</taxon>
        <taxon>Vertebrata</taxon>
        <taxon>Euteleostomi</taxon>
        <taxon>Lepidosauria</taxon>
        <taxon>Squamata</taxon>
        <taxon>Bifurcata</taxon>
        <taxon>Unidentata</taxon>
        <taxon>Episquamata</taxon>
        <taxon>Toxicofera</taxon>
        <taxon>Serpentes</taxon>
        <taxon>Colubroidea</taxon>
        <taxon>Viperidae</taxon>
        <taxon>Crotalinae</taxon>
        <taxon>Bothrops</taxon>
    </lineage>
</organism>
<feature type="chain" id="PRO_0000428809" description="L-amino-acid oxidase Bfon20">
    <location>
        <begin position="1"/>
        <end position="15" status="greater than"/>
    </location>
</feature>
<feature type="non-terminal residue" evidence="4">
    <location>
        <position position="15"/>
    </location>
</feature>
<keyword id="KW-0044">Antibiotic</keyword>
<keyword id="KW-0929">Antimicrobial</keyword>
<keyword id="KW-0053">Apoptosis</keyword>
<keyword id="KW-0204">Cytolysis</keyword>
<keyword id="KW-0903">Direct protein sequencing</keyword>
<keyword id="KW-1015">Disulfide bond</keyword>
<keyword id="KW-0274">FAD</keyword>
<keyword id="KW-0285">Flavoprotein</keyword>
<keyword id="KW-0325">Glycoprotein</keyword>
<keyword id="KW-0354">Hemolysis</keyword>
<keyword id="KW-1199">Hemostasis impairing toxin</keyword>
<keyword id="KW-0560">Oxidoreductase</keyword>
<keyword id="KW-0964">Secreted</keyword>
<keyword id="KW-0800">Toxin</keyword>